<reference key="1">
    <citation type="submission" date="2006-12" db="EMBL/GenBank/DDBJ databases">
        <title>Bifidobacterium adolescentis complete genome sequence.</title>
        <authorList>
            <person name="Suzuki T."/>
            <person name="Tsuda Y."/>
            <person name="Kanou N."/>
            <person name="Inoue T."/>
            <person name="Kumazaki K."/>
            <person name="Nagano S."/>
            <person name="Hirai S."/>
            <person name="Tanaka K."/>
            <person name="Watanabe K."/>
        </authorList>
    </citation>
    <scope>NUCLEOTIDE SEQUENCE [LARGE SCALE GENOMIC DNA]</scope>
    <source>
        <strain>ATCC 15703 / DSM 20083 / NCTC 11814 / E194a</strain>
    </source>
</reference>
<comment type="function">
    <text evidence="1">Binds directly to 23S rRNA. The L1 stalk is quite mobile in the ribosome, and is involved in E site tRNA release.</text>
</comment>
<comment type="function">
    <text evidence="1">Protein L1 is also a translational repressor protein, it controls the translation of the L11 operon by binding to its mRNA.</text>
</comment>
<comment type="subunit">
    <text evidence="1">Part of the 50S ribosomal subunit.</text>
</comment>
<comment type="similarity">
    <text evidence="1">Belongs to the universal ribosomal protein uL1 family.</text>
</comment>
<organism>
    <name type="scientific">Bifidobacterium adolescentis (strain ATCC 15703 / DSM 20083 / NCTC 11814 / E194a)</name>
    <dbReference type="NCBI Taxonomy" id="367928"/>
    <lineage>
        <taxon>Bacteria</taxon>
        <taxon>Bacillati</taxon>
        <taxon>Actinomycetota</taxon>
        <taxon>Actinomycetes</taxon>
        <taxon>Bifidobacteriales</taxon>
        <taxon>Bifidobacteriaceae</taxon>
        <taxon>Bifidobacterium</taxon>
    </lineage>
</organism>
<feature type="chain" id="PRO_0000307964" description="Large ribosomal subunit protein uL1">
    <location>
        <begin position="1"/>
        <end position="230"/>
    </location>
</feature>
<protein>
    <recommendedName>
        <fullName evidence="1">Large ribosomal subunit protein uL1</fullName>
    </recommendedName>
    <alternativeName>
        <fullName evidence="2">50S ribosomal protein L1</fullName>
    </alternativeName>
</protein>
<gene>
    <name evidence="1" type="primary">rplA</name>
    <name type="ordered locus">BAD_0248</name>
</gene>
<proteinExistence type="inferred from homology"/>
<keyword id="KW-1185">Reference proteome</keyword>
<keyword id="KW-0678">Repressor</keyword>
<keyword id="KW-0687">Ribonucleoprotein</keyword>
<keyword id="KW-0689">Ribosomal protein</keyword>
<keyword id="KW-0694">RNA-binding</keyword>
<keyword id="KW-0699">rRNA-binding</keyword>
<keyword id="KW-0810">Translation regulation</keyword>
<keyword id="KW-0820">tRNA-binding</keyword>
<evidence type="ECO:0000255" key="1">
    <source>
        <dbReference type="HAMAP-Rule" id="MF_01318"/>
    </source>
</evidence>
<evidence type="ECO:0000305" key="2"/>
<sequence>MVQRSKKYREAAEKIDRNNLYTANEAIALLKSMPEYKFDQTVEAVLRLNVDPRKADQLVRGSVNLPNGTGKTAKVLVFARGPKATEALEAGADIVGDDDLVQKVADGFLDFDSVVATPDMMGKVGRLGRVLGPRGLMPNPKTGTVTMDVTKAIKDIKGGKVDFRVDKNGNLSFLIGKMSFTEQALDENFKAVADEVKRLKPSTVKGRYVTKATITSTMNPGVPVDPAVVA</sequence>
<accession>A0ZZZ6</accession>
<name>RL1_BIFAA</name>
<dbReference type="EMBL" id="AP009256">
    <property type="protein sequence ID" value="BAF39029.1"/>
    <property type="molecule type" value="Genomic_DNA"/>
</dbReference>
<dbReference type="RefSeq" id="WP_003807775.1">
    <property type="nucleotide sequence ID" value="NZ_CAXVKE010000001.1"/>
</dbReference>
<dbReference type="SMR" id="A0ZZZ6"/>
<dbReference type="STRING" id="367928.BAD_0248"/>
<dbReference type="PaxDb" id="1680-BADO_0257"/>
<dbReference type="GeneID" id="4556670"/>
<dbReference type="KEGG" id="bad:BAD_0248"/>
<dbReference type="HOGENOM" id="CLU_062853_0_0_11"/>
<dbReference type="Proteomes" id="UP000008702">
    <property type="component" value="Chromosome"/>
</dbReference>
<dbReference type="GO" id="GO:0015934">
    <property type="term" value="C:large ribosomal subunit"/>
    <property type="evidence" value="ECO:0007669"/>
    <property type="project" value="InterPro"/>
</dbReference>
<dbReference type="GO" id="GO:0019843">
    <property type="term" value="F:rRNA binding"/>
    <property type="evidence" value="ECO:0007669"/>
    <property type="project" value="UniProtKB-UniRule"/>
</dbReference>
<dbReference type="GO" id="GO:0003735">
    <property type="term" value="F:structural constituent of ribosome"/>
    <property type="evidence" value="ECO:0007669"/>
    <property type="project" value="InterPro"/>
</dbReference>
<dbReference type="GO" id="GO:0000049">
    <property type="term" value="F:tRNA binding"/>
    <property type="evidence" value="ECO:0007669"/>
    <property type="project" value="UniProtKB-KW"/>
</dbReference>
<dbReference type="GO" id="GO:0006417">
    <property type="term" value="P:regulation of translation"/>
    <property type="evidence" value="ECO:0007669"/>
    <property type="project" value="UniProtKB-KW"/>
</dbReference>
<dbReference type="GO" id="GO:0006412">
    <property type="term" value="P:translation"/>
    <property type="evidence" value="ECO:0007669"/>
    <property type="project" value="UniProtKB-UniRule"/>
</dbReference>
<dbReference type="CDD" id="cd00403">
    <property type="entry name" value="Ribosomal_L1"/>
    <property type="match status" value="1"/>
</dbReference>
<dbReference type="FunFam" id="3.40.50.790:FF:000001">
    <property type="entry name" value="50S ribosomal protein L1"/>
    <property type="match status" value="1"/>
</dbReference>
<dbReference type="Gene3D" id="3.30.190.20">
    <property type="match status" value="1"/>
</dbReference>
<dbReference type="Gene3D" id="3.40.50.790">
    <property type="match status" value="1"/>
</dbReference>
<dbReference type="HAMAP" id="MF_01318_B">
    <property type="entry name" value="Ribosomal_uL1_B"/>
    <property type="match status" value="1"/>
</dbReference>
<dbReference type="InterPro" id="IPR005878">
    <property type="entry name" value="Ribosom_uL1_bac-type"/>
</dbReference>
<dbReference type="InterPro" id="IPR002143">
    <property type="entry name" value="Ribosomal_uL1"/>
</dbReference>
<dbReference type="InterPro" id="IPR023674">
    <property type="entry name" value="Ribosomal_uL1-like"/>
</dbReference>
<dbReference type="InterPro" id="IPR028364">
    <property type="entry name" value="Ribosomal_uL1/biogenesis"/>
</dbReference>
<dbReference type="InterPro" id="IPR016095">
    <property type="entry name" value="Ribosomal_uL1_3-a/b-sand"/>
</dbReference>
<dbReference type="InterPro" id="IPR023673">
    <property type="entry name" value="Ribosomal_uL1_CS"/>
</dbReference>
<dbReference type="NCBIfam" id="TIGR01169">
    <property type="entry name" value="rplA_bact"/>
    <property type="match status" value="1"/>
</dbReference>
<dbReference type="PANTHER" id="PTHR36427">
    <property type="entry name" value="54S RIBOSOMAL PROTEIN L1, MITOCHONDRIAL"/>
    <property type="match status" value="1"/>
</dbReference>
<dbReference type="PANTHER" id="PTHR36427:SF3">
    <property type="entry name" value="LARGE RIBOSOMAL SUBUNIT PROTEIN UL1M"/>
    <property type="match status" value="1"/>
</dbReference>
<dbReference type="Pfam" id="PF00687">
    <property type="entry name" value="Ribosomal_L1"/>
    <property type="match status" value="1"/>
</dbReference>
<dbReference type="PIRSF" id="PIRSF002155">
    <property type="entry name" value="Ribosomal_L1"/>
    <property type="match status" value="1"/>
</dbReference>
<dbReference type="SUPFAM" id="SSF56808">
    <property type="entry name" value="Ribosomal protein L1"/>
    <property type="match status" value="1"/>
</dbReference>
<dbReference type="PROSITE" id="PS01199">
    <property type="entry name" value="RIBOSOMAL_L1"/>
    <property type="match status" value="1"/>
</dbReference>